<dbReference type="EMBL" id="CR857478">
    <property type="protein sequence ID" value="CAH89764.1"/>
    <property type="molecule type" value="mRNA"/>
</dbReference>
<dbReference type="RefSeq" id="NP_001124806.1">
    <property type="nucleotide sequence ID" value="NM_001131334.1"/>
</dbReference>
<dbReference type="FunCoup" id="Q5REP3">
    <property type="interactions" value="92"/>
</dbReference>
<dbReference type="GlyCosmos" id="Q5REP3">
    <property type="glycosylation" value="1 site, No reported glycans"/>
</dbReference>
<dbReference type="GeneID" id="100171662"/>
<dbReference type="KEGG" id="pon:100171662"/>
<dbReference type="CTD" id="145748"/>
<dbReference type="InParanoid" id="Q5REP3"/>
<dbReference type="OrthoDB" id="538216at2759"/>
<dbReference type="Proteomes" id="UP000001595">
    <property type="component" value="Unplaced"/>
</dbReference>
<dbReference type="GO" id="GO:0016020">
    <property type="term" value="C:membrane"/>
    <property type="evidence" value="ECO:0007669"/>
    <property type="project" value="UniProtKB-SubCell"/>
</dbReference>
<dbReference type="CDD" id="cd00118">
    <property type="entry name" value="LysM"/>
    <property type="match status" value="1"/>
</dbReference>
<dbReference type="Gene3D" id="3.10.350.10">
    <property type="entry name" value="LysM domain"/>
    <property type="match status" value="1"/>
</dbReference>
<dbReference type="InterPro" id="IPR045030">
    <property type="entry name" value="LYSM1-4"/>
</dbReference>
<dbReference type="InterPro" id="IPR018392">
    <property type="entry name" value="LysM_dom"/>
</dbReference>
<dbReference type="InterPro" id="IPR036779">
    <property type="entry name" value="LysM_dom_sf"/>
</dbReference>
<dbReference type="PANTHER" id="PTHR20932:SF7">
    <property type="entry name" value="AND PUTATIVE PEPTIDOGLYCAN-BINDING DOMAIN-CONTAINING PROTEIN 4-RELATED"/>
    <property type="match status" value="1"/>
</dbReference>
<dbReference type="PANTHER" id="PTHR20932">
    <property type="entry name" value="LYSM AND PUTATIVE PEPTIDOGLYCAN-BINDING DOMAIN-CONTAINING PROTEIN"/>
    <property type="match status" value="1"/>
</dbReference>
<dbReference type="PROSITE" id="PS51782">
    <property type="entry name" value="LYSM"/>
    <property type="match status" value="1"/>
</dbReference>
<protein>
    <recommendedName>
        <fullName>LysM and putative peptidoglycan-binding domain-containing protein 4</fullName>
    </recommendedName>
</protein>
<feature type="chain" id="PRO_0000248015" description="LysM and putative peptidoglycan-binding domain-containing protein 4">
    <location>
        <begin position="1"/>
        <end position="296"/>
    </location>
</feature>
<feature type="topological domain" description="Extracellular" evidence="1">
    <location>
        <begin position="1"/>
        <end position="217"/>
    </location>
</feature>
<feature type="transmembrane region" description="Helical" evidence="1">
    <location>
        <begin position="218"/>
        <end position="238"/>
    </location>
</feature>
<feature type="topological domain" description="Cytoplasmic" evidence="1">
    <location>
        <begin position="239"/>
        <end position="296"/>
    </location>
</feature>
<feature type="domain" description="LysM" evidence="2">
    <location>
        <begin position="74"/>
        <end position="118"/>
    </location>
</feature>
<feature type="glycosylation site" description="N-linked (GlcNAc...) asparagine" evidence="1">
    <location>
        <position position="30"/>
    </location>
</feature>
<comment type="subcellular location">
    <subcellularLocation>
        <location evidence="3">Membrane</location>
        <topology evidence="3">Single-pass membrane protein</topology>
    </subcellularLocation>
</comment>
<keyword id="KW-0325">Glycoprotein</keyword>
<keyword id="KW-0472">Membrane</keyword>
<keyword id="KW-1185">Reference proteome</keyword>
<keyword id="KW-0812">Transmembrane</keyword>
<keyword id="KW-1133">Transmembrane helix</keyword>
<sequence length="296" mass="32122">MRHKELLSKTFQGPAVVCRTPTSHVYMFKNGSGDSGDASEEESHRVVLRPRGKELQKSGVHQPHQAGAGDVVLLQRELAQEDSLNKLALQYGCKVADIKKVNNFIREQDLYALKSIKSPVKNHGILTETHKELKPLLSPSSETTVTVELPDADRAGAGTDAQASQLMDFFKGIDQDIECAVQSEIFLHESYCIDTSHQPLLPAPPKTPMDGADCGIQWWNAVFIMLLIGIVLPIFYLVYFKIQASGETPNSLNTAAIPNGSMAMGTVPGQAPRLAVAVPTVPSADSQFSQTTQAGN</sequence>
<gene>
    <name type="primary">LYSMD4</name>
</gene>
<evidence type="ECO:0000255" key="1"/>
<evidence type="ECO:0000255" key="2">
    <source>
        <dbReference type="PROSITE-ProRule" id="PRU01118"/>
    </source>
</evidence>
<evidence type="ECO:0000305" key="3"/>
<reference key="1">
    <citation type="submission" date="2004-11" db="EMBL/GenBank/DDBJ databases">
        <authorList>
            <consortium name="The German cDNA consortium"/>
        </authorList>
    </citation>
    <scope>NUCLEOTIDE SEQUENCE [LARGE SCALE MRNA]</scope>
    <source>
        <tissue>Kidney</tissue>
    </source>
</reference>
<name>LYSM4_PONAB</name>
<proteinExistence type="evidence at transcript level"/>
<accession>Q5REP3</accession>
<organism>
    <name type="scientific">Pongo abelii</name>
    <name type="common">Sumatran orangutan</name>
    <name type="synonym">Pongo pygmaeus abelii</name>
    <dbReference type="NCBI Taxonomy" id="9601"/>
    <lineage>
        <taxon>Eukaryota</taxon>
        <taxon>Metazoa</taxon>
        <taxon>Chordata</taxon>
        <taxon>Craniata</taxon>
        <taxon>Vertebrata</taxon>
        <taxon>Euteleostomi</taxon>
        <taxon>Mammalia</taxon>
        <taxon>Eutheria</taxon>
        <taxon>Euarchontoglires</taxon>
        <taxon>Primates</taxon>
        <taxon>Haplorrhini</taxon>
        <taxon>Catarrhini</taxon>
        <taxon>Hominidae</taxon>
        <taxon>Pongo</taxon>
    </lineage>
</organism>